<organism>
    <name type="scientific">Aspergillus terreus (strain NIH 2624 / FGSC A1156)</name>
    <dbReference type="NCBI Taxonomy" id="341663"/>
    <lineage>
        <taxon>Eukaryota</taxon>
        <taxon>Fungi</taxon>
        <taxon>Dikarya</taxon>
        <taxon>Ascomycota</taxon>
        <taxon>Pezizomycotina</taxon>
        <taxon>Eurotiomycetes</taxon>
        <taxon>Eurotiomycetidae</taxon>
        <taxon>Eurotiales</taxon>
        <taxon>Aspergillaceae</taxon>
        <taxon>Aspergillus</taxon>
        <taxon>Aspergillus subgen. Circumdati</taxon>
    </lineage>
</organism>
<gene>
    <name type="primary">nop16</name>
    <name type="ORF">ATEG_08191</name>
</gene>
<evidence type="ECO:0000250" key="1"/>
<evidence type="ECO:0000256" key="2">
    <source>
        <dbReference type="SAM" id="MobiDB-lite"/>
    </source>
</evidence>
<evidence type="ECO:0000305" key="3"/>
<comment type="function">
    <text evidence="1">Involved in the biogenesis of the 60S ribosomal subunit.</text>
</comment>
<comment type="subunit">
    <text evidence="1">Component of the pre-66S ribosomal particle.</text>
</comment>
<comment type="subcellular location">
    <subcellularLocation>
        <location evidence="1">Nucleus</location>
        <location evidence="1">Nucleolus</location>
    </subcellularLocation>
</comment>
<comment type="similarity">
    <text evidence="3">Belongs to the NOP16 family.</text>
</comment>
<feature type="chain" id="PRO_0000320369" description="Nucleolar protein 16">
    <location>
        <begin position="1"/>
        <end position="239"/>
    </location>
</feature>
<feature type="region of interest" description="Disordered" evidence="2">
    <location>
        <begin position="1"/>
        <end position="23"/>
    </location>
</feature>
<feature type="region of interest" description="Disordered" evidence="2">
    <location>
        <begin position="132"/>
        <end position="192"/>
    </location>
</feature>
<feature type="region of interest" description="Disordered" evidence="2">
    <location>
        <begin position="210"/>
        <end position="239"/>
    </location>
</feature>
<name>NOP16_ASPTN</name>
<sequence length="239" mass="26926">MGTIRQKKKNRSSVPKTKAKRTGQLKNGNKKINVLGNAIIAENWDRKLTLTQNYRRLGLVHRLNAPAGGSEKRATKDGTIVTDPEDPLYIKSSTESIAKTLGLGEAKVERDPETGKIIRVIGNDDEVEIAGRKRRRSNPLNDPLNDLSDNEEDASAGPNKNGPSAIVQQLERQADKESSQVAKKKPRHLSKREEEWIEALIQRHGDNVSAMVRDRKLNPMQQSEGDLKRRIRKWKEMQS</sequence>
<proteinExistence type="inferred from homology"/>
<reference key="1">
    <citation type="submission" date="2005-09" db="EMBL/GenBank/DDBJ databases">
        <title>Annotation of the Aspergillus terreus NIH2624 genome.</title>
        <authorList>
            <person name="Birren B.W."/>
            <person name="Lander E.S."/>
            <person name="Galagan J.E."/>
            <person name="Nusbaum C."/>
            <person name="Devon K."/>
            <person name="Henn M."/>
            <person name="Ma L.-J."/>
            <person name="Jaffe D.B."/>
            <person name="Butler J."/>
            <person name="Alvarez P."/>
            <person name="Gnerre S."/>
            <person name="Grabherr M."/>
            <person name="Kleber M."/>
            <person name="Mauceli E.W."/>
            <person name="Brockman W."/>
            <person name="Rounsley S."/>
            <person name="Young S.K."/>
            <person name="LaButti K."/>
            <person name="Pushparaj V."/>
            <person name="DeCaprio D."/>
            <person name="Crawford M."/>
            <person name="Koehrsen M."/>
            <person name="Engels R."/>
            <person name="Montgomery P."/>
            <person name="Pearson M."/>
            <person name="Howarth C."/>
            <person name="Larson L."/>
            <person name="Luoma S."/>
            <person name="White J."/>
            <person name="Alvarado L."/>
            <person name="Kodira C.D."/>
            <person name="Zeng Q."/>
            <person name="Oleary S."/>
            <person name="Yandava C."/>
            <person name="Denning D.W."/>
            <person name="Nierman W.C."/>
            <person name="Milne T."/>
            <person name="Madden K."/>
        </authorList>
    </citation>
    <scope>NUCLEOTIDE SEQUENCE [LARGE SCALE GENOMIC DNA]</scope>
    <source>
        <strain>NIH 2624 / FGSC A1156</strain>
    </source>
</reference>
<keyword id="KW-0539">Nucleus</keyword>
<keyword id="KW-1185">Reference proteome</keyword>
<keyword id="KW-0687">Ribonucleoprotein</keyword>
<keyword id="KW-0690">Ribosome biogenesis</keyword>
<keyword id="KW-0698">rRNA processing</keyword>
<protein>
    <recommendedName>
        <fullName>Nucleolar protein 16</fullName>
    </recommendedName>
</protein>
<dbReference type="EMBL" id="CH476605">
    <property type="protein sequence ID" value="EAU31364.1"/>
    <property type="molecule type" value="Genomic_DNA"/>
</dbReference>
<dbReference type="RefSeq" id="XP_001216812.1">
    <property type="nucleotide sequence ID" value="XM_001216812.1"/>
</dbReference>
<dbReference type="SMR" id="Q0CDP3"/>
<dbReference type="STRING" id="341663.Q0CDP3"/>
<dbReference type="EnsemblFungi" id="EAU31364">
    <property type="protein sequence ID" value="EAU31364"/>
    <property type="gene ID" value="ATEG_08191"/>
</dbReference>
<dbReference type="GeneID" id="4353226"/>
<dbReference type="VEuPathDB" id="FungiDB:ATEG_08191"/>
<dbReference type="eggNOG" id="KOG4771">
    <property type="taxonomic scope" value="Eukaryota"/>
</dbReference>
<dbReference type="HOGENOM" id="CLU_078857_0_0_1"/>
<dbReference type="OMA" id="MQQTEAD"/>
<dbReference type="OrthoDB" id="285729at2759"/>
<dbReference type="Proteomes" id="UP000007963">
    <property type="component" value="Unassembled WGS sequence"/>
</dbReference>
<dbReference type="GO" id="GO:0005730">
    <property type="term" value="C:nucleolus"/>
    <property type="evidence" value="ECO:0007669"/>
    <property type="project" value="UniProtKB-SubCell"/>
</dbReference>
<dbReference type="GO" id="GO:0030687">
    <property type="term" value="C:preribosome, large subunit precursor"/>
    <property type="evidence" value="ECO:0007669"/>
    <property type="project" value="EnsemblFungi"/>
</dbReference>
<dbReference type="GO" id="GO:0042273">
    <property type="term" value="P:ribosomal large subunit biogenesis"/>
    <property type="evidence" value="ECO:0007669"/>
    <property type="project" value="EnsemblFungi"/>
</dbReference>
<dbReference type="GO" id="GO:0006364">
    <property type="term" value="P:rRNA processing"/>
    <property type="evidence" value="ECO:0007669"/>
    <property type="project" value="UniProtKB-KW"/>
</dbReference>
<dbReference type="InterPro" id="IPR019002">
    <property type="entry name" value="Ribosome_biogenesis_Nop16"/>
</dbReference>
<dbReference type="PANTHER" id="PTHR13243">
    <property type="entry name" value="HSPC111 PROTEIN-RELATED"/>
    <property type="match status" value="1"/>
</dbReference>
<dbReference type="PANTHER" id="PTHR13243:SF1">
    <property type="entry name" value="NUCLEOLAR PROTEIN 16"/>
    <property type="match status" value="1"/>
</dbReference>
<dbReference type="Pfam" id="PF09420">
    <property type="entry name" value="Nop16"/>
    <property type="match status" value="1"/>
</dbReference>
<accession>Q0CDP3</accession>